<organism>
    <name type="scientific">Bos taurus</name>
    <name type="common">Bovine</name>
    <dbReference type="NCBI Taxonomy" id="9913"/>
    <lineage>
        <taxon>Eukaryota</taxon>
        <taxon>Metazoa</taxon>
        <taxon>Chordata</taxon>
        <taxon>Craniata</taxon>
        <taxon>Vertebrata</taxon>
        <taxon>Euteleostomi</taxon>
        <taxon>Mammalia</taxon>
        <taxon>Eutheria</taxon>
        <taxon>Laurasiatheria</taxon>
        <taxon>Artiodactyla</taxon>
        <taxon>Ruminantia</taxon>
        <taxon>Pecora</taxon>
        <taxon>Bovidae</taxon>
        <taxon>Bovinae</taxon>
        <taxon>Bos</taxon>
    </lineage>
</organism>
<keyword id="KW-1003">Cell membrane</keyword>
<keyword id="KW-0966">Cell projection</keyword>
<keyword id="KW-0963">Cytoplasm</keyword>
<keyword id="KW-0206">Cytoskeleton</keyword>
<keyword id="KW-0217">Developmental protein</keyword>
<keyword id="KW-0472">Membrane</keyword>
<keyword id="KW-0493">Microtubule</keyword>
<keyword id="KW-1185">Reference proteome</keyword>
<dbReference type="EMBL" id="BC123435">
    <property type="protein sequence ID" value="AAI23436.1"/>
    <property type="molecule type" value="mRNA"/>
</dbReference>
<dbReference type="RefSeq" id="NP_001069615.1">
    <property type="nucleotide sequence ID" value="NM_001076147.1"/>
</dbReference>
<dbReference type="RefSeq" id="XP_005213938.1">
    <property type="nucleotide sequence ID" value="XM_005213881.5"/>
</dbReference>
<dbReference type="SMR" id="Q08E39"/>
<dbReference type="FunCoup" id="Q08E39">
    <property type="interactions" value="487"/>
</dbReference>
<dbReference type="STRING" id="9913.ENSBTAP00000043748"/>
<dbReference type="PaxDb" id="9913-ENSBTAP00000043748"/>
<dbReference type="Ensembl" id="ENSBTAT00000002324.6">
    <property type="protein sequence ID" value="ENSBTAP00000043748.2"/>
    <property type="gene ID" value="ENSBTAG00000001774.6"/>
</dbReference>
<dbReference type="Ensembl" id="ENSBTAT00000095934.1">
    <property type="protein sequence ID" value="ENSBTAP00000084199.1"/>
    <property type="gene ID" value="ENSBTAG00000001774.6"/>
</dbReference>
<dbReference type="Ensembl" id="ENSBTAT00000110719.1">
    <property type="protein sequence ID" value="ENSBTAP00000090374.1"/>
    <property type="gene ID" value="ENSBTAG00000001774.6"/>
</dbReference>
<dbReference type="Ensembl" id="ENSBTAT00000120651.1">
    <property type="protein sequence ID" value="ENSBTAP00000095855.1"/>
    <property type="gene ID" value="ENSBTAG00000001774.6"/>
</dbReference>
<dbReference type="Ensembl" id="ENSBTAT00000121631.1">
    <property type="protein sequence ID" value="ENSBTAP00000078798.1"/>
    <property type="gene ID" value="ENSBTAG00000001774.6"/>
</dbReference>
<dbReference type="Ensembl" id="ENSBTAT00000134385.1">
    <property type="protein sequence ID" value="ENSBTAP00000081341.1"/>
    <property type="gene ID" value="ENSBTAG00000001774.6"/>
</dbReference>
<dbReference type="GeneID" id="539090"/>
<dbReference type="KEGG" id="bta:539090"/>
<dbReference type="CTD" id="10253"/>
<dbReference type="VEuPathDB" id="HostDB:ENSBTAG00000001774"/>
<dbReference type="VGNC" id="VGNC:35242">
    <property type="gene designation" value="SPRY2"/>
</dbReference>
<dbReference type="eggNOG" id="ENOG502QTG8">
    <property type="taxonomic scope" value="Eukaryota"/>
</dbReference>
<dbReference type="GeneTree" id="ENSGT00950000183055"/>
<dbReference type="HOGENOM" id="CLU_077696_0_0_1"/>
<dbReference type="InParanoid" id="Q08E39"/>
<dbReference type="OMA" id="TQSHCCV"/>
<dbReference type="OrthoDB" id="10038884at2759"/>
<dbReference type="TreeFam" id="TF325070"/>
<dbReference type="Reactome" id="R-BTA-1295596">
    <property type="pathway name" value="Spry regulation of FGF signaling"/>
</dbReference>
<dbReference type="Reactome" id="R-BTA-182971">
    <property type="pathway name" value="EGFR downregulation"/>
</dbReference>
<dbReference type="Proteomes" id="UP000009136">
    <property type="component" value="Chromosome 12"/>
</dbReference>
<dbReference type="Bgee" id="ENSBTAG00000001774">
    <property type="expression patterns" value="Expressed in ureter and 103 other cell types or tissues"/>
</dbReference>
<dbReference type="GO" id="GO:0015629">
    <property type="term" value="C:actin cytoskeleton"/>
    <property type="evidence" value="ECO:0007669"/>
    <property type="project" value="Ensembl"/>
</dbReference>
<dbReference type="GO" id="GO:0005829">
    <property type="term" value="C:cytosol"/>
    <property type="evidence" value="ECO:0000318"/>
    <property type="project" value="GO_Central"/>
</dbReference>
<dbReference type="GO" id="GO:1990752">
    <property type="term" value="C:microtubule end"/>
    <property type="evidence" value="ECO:0007669"/>
    <property type="project" value="Ensembl"/>
</dbReference>
<dbReference type="GO" id="GO:0005634">
    <property type="term" value="C:nucleus"/>
    <property type="evidence" value="ECO:0007669"/>
    <property type="project" value="Ensembl"/>
</dbReference>
<dbReference type="GO" id="GO:0032587">
    <property type="term" value="C:ruffle membrane"/>
    <property type="evidence" value="ECO:0007669"/>
    <property type="project" value="UniProtKB-SubCell"/>
</dbReference>
<dbReference type="GO" id="GO:0019901">
    <property type="term" value="F:protein kinase binding"/>
    <property type="evidence" value="ECO:0007669"/>
    <property type="project" value="Ensembl"/>
</dbReference>
<dbReference type="GO" id="GO:0043539">
    <property type="term" value="F:protein serine/threonine kinase activator activity"/>
    <property type="evidence" value="ECO:0007669"/>
    <property type="project" value="Ensembl"/>
</dbReference>
<dbReference type="GO" id="GO:0030291">
    <property type="term" value="F:protein serine/threonine kinase inhibitor activity"/>
    <property type="evidence" value="ECO:0007669"/>
    <property type="project" value="Ensembl"/>
</dbReference>
<dbReference type="GO" id="GO:0055105">
    <property type="term" value="F:ubiquitin-protein transferase inhibitor activity"/>
    <property type="evidence" value="ECO:0007669"/>
    <property type="project" value="Ensembl"/>
</dbReference>
<dbReference type="GO" id="GO:0048513">
    <property type="term" value="P:animal organ development"/>
    <property type="evidence" value="ECO:0000318"/>
    <property type="project" value="GO_Central"/>
</dbReference>
<dbReference type="GO" id="GO:0060449">
    <property type="term" value="P:bud elongation involved in lung branching"/>
    <property type="evidence" value="ECO:0007669"/>
    <property type="project" value="Ensembl"/>
</dbReference>
<dbReference type="GO" id="GO:0045165">
    <property type="term" value="P:cell fate commitment"/>
    <property type="evidence" value="ECO:0007669"/>
    <property type="project" value="Ensembl"/>
</dbReference>
<dbReference type="GO" id="GO:1990830">
    <property type="term" value="P:cellular response to leukemia inhibitory factor"/>
    <property type="evidence" value="ECO:0007669"/>
    <property type="project" value="Ensembl"/>
</dbReference>
<dbReference type="GO" id="GO:0035924">
    <property type="term" value="P:cellular response to vascular endothelial growth factor stimulus"/>
    <property type="evidence" value="ECO:0007669"/>
    <property type="project" value="Ensembl"/>
</dbReference>
<dbReference type="GO" id="GO:0070371">
    <property type="term" value="P:ERK1 and ERK2 cascade"/>
    <property type="evidence" value="ECO:0007669"/>
    <property type="project" value="Ensembl"/>
</dbReference>
<dbReference type="GO" id="GO:0000132">
    <property type="term" value="P:establishment of mitotic spindle orientation"/>
    <property type="evidence" value="ECO:0007669"/>
    <property type="project" value="Ensembl"/>
</dbReference>
<dbReference type="GO" id="GO:0008543">
    <property type="term" value="P:fibroblast growth factor receptor signaling pathway"/>
    <property type="evidence" value="ECO:0007669"/>
    <property type="project" value="Ensembl"/>
</dbReference>
<dbReference type="GO" id="GO:0042472">
    <property type="term" value="P:inner ear morphogenesis"/>
    <property type="evidence" value="ECO:0007669"/>
    <property type="project" value="Ensembl"/>
</dbReference>
<dbReference type="GO" id="GO:0060437">
    <property type="term" value="P:lung growth"/>
    <property type="evidence" value="ECO:0007669"/>
    <property type="project" value="Ensembl"/>
</dbReference>
<dbReference type="GO" id="GO:0016525">
    <property type="term" value="P:negative regulation of angiogenesis"/>
    <property type="evidence" value="ECO:0007669"/>
    <property type="project" value="Ensembl"/>
</dbReference>
<dbReference type="GO" id="GO:0043066">
    <property type="term" value="P:negative regulation of apoptotic process"/>
    <property type="evidence" value="ECO:0007669"/>
    <property type="project" value="Ensembl"/>
</dbReference>
<dbReference type="GO" id="GO:0008285">
    <property type="term" value="P:negative regulation of cell population proliferation"/>
    <property type="evidence" value="ECO:0007669"/>
    <property type="project" value="Ensembl"/>
</dbReference>
<dbReference type="GO" id="GO:0031345">
    <property type="term" value="P:negative regulation of cell projection organization"/>
    <property type="evidence" value="ECO:0007669"/>
    <property type="project" value="Ensembl"/>
</dbReference>
<dbReference type="GO" id="GO:0010719">
    <property type="term" value="P:negative regulation of epithelial to mesenchymal transition"/>
    <property type="evidence" value="ECO:0000250"/>
    <property type="project" value="UniProtKB"/>
</dbReference>
<dbReference type="GO" id="GO:0070373">
    <property type="term" value="P:negative regulation of ERK1 and ERK2 cascade"/>
    <property type="evidence" value="ECO:0000250"/>
    <property type="project" value="UniProtKB"/>
</dbReference>
<dbReference type="GO" id="GO:0040037">
    <property type="term" value="P:negative regulation of fibroblast growth factor receptor signaling pathway"/>
    <property type="evidence" value="ECO:0000318"/>
    <property type="project" value="GO_Central"/>
</dbReference>
<dbReference type="GO" id="GO:1902747">
    <property type="term" value="P:negative regulation of lens fiber cell differentiation"/>
    <property type="evidence" value="ECO:0000250"/>
    <property type="project" value="UniProtKB"/>
</dbReference>
<dbReference type="GO" id="GO:0051387">
    <property type="term" value="P:negative regulation of neurotrophin TRK receptor signaling pathway"/>
    <property type="evidence" value="ECO:0007669"/>
    <property type="project" value="Ensembl"/>
</dbReference>
<dbReference type="GO" id="GO:0031397">
    <property type="term" value="P:negative regulation of protein ubiquitination"/>
    <property type="evidence" value="ECO:0000250"/>
    <property type="project" value="UniProtKB"/>
</dbReference>
<dbReference type="GO" id="GO:0046580">
    <property type="term" value="P:negative regulation of Ras protein signal transduction"/>
    <property type="evidence" value="ECO:0000318"/>
    <property type="project" value="GO_Central"/>
</dbReference>
<dbReference type="GO" id="GO:0030512">
    <property type="term" value="P:negative regulation of transforming growth factor beta receptor signaling pathway"/>
    <property type="evidence" value="ECO:0000250"/>
    <property type="project" value="UniProtKB"/>
</dbReference>
<dbReference type="GO" id="GO:1900747">
    <property type="term" value="P:negative regulation of vascular endothelial growth factor signaling pathway"/>
    <property type="evidence" value="ECO:0007669"/>
    <property type="project" value="Ensembl"/>
</dbReference>
<dbReference type="GO" id="GO:0030335">
    <property type="term" value="P:positive regulation of cell migration"/>
    <property type="evidence" value="ECO:0007669"/>
    <property type="project" value="Ensembl"/>
</dbReference>
<dbReference type="GO" id="GO:0045742">
    <property type="term" value="P:positive regulation of epidermal growth factor receptor signaling pathway"/>
    <property type="evidence" value="ECO:0007669"/>
    <property type="project" value="Ensembl"/>
</dbReference>
<dbReference type="GO" id="GO:0070374">
    <property type="term" value="P:positive regulation of ERK1 and ERK2 cascade"/>
    <property type="evidence" value="ECO:0007669"/>
    <property type="project" value="Ensembl"/>
</dbReference>
<dbReference type="GO" id="GO:0010628">
    <property type="term" value="P:positive regulation of gene expression"/>
    <property type="evidence" value="ECO:0007669"/>
    <property type="project" value="Ensembl"/>
</dbReference>
<dbReference type="GO" id="GO:0051897">
    <property type="term" value="P:positive regulation of phosphatidylinositol 3-kinase/protein kinase B signal transduction"/>
    <property type="evidence" value="ECO:0007669"/>
    <property type="project" value="Ensembl"/>
</dbReference>
<dbReference type="GO" id="GO:0007605">
    <property type="term" value="P:sensory perception of sound"/>
    <property type="evidence" value="ECO:0007669"/>
    <property type="project" value="Ensembl"/>
</dbReference>
<dbReference type="InterPro" id="IPR007875">
    <property type="entry name" value="Sprouty"/>
</dbReference>
<dbReference type="InterPro" id="IPR051192">
    <property type="entry name" value="Sprouty_domain"/>
</dbReference>
<dbReference type="PANTHER" id="PTHR12365:SF8">
    <property type="entry name" value="PROTEIN SPROUTY HOMOLOG 2"/>
    <property type="match status" value="1"/>
</dbReference>
<dbReference type="PANTHER" id="PTHR12365">
    <property type="entry name" value="SPROUTY"/>
    <property type="match status" value="1"/>
</dbReference>
<dbReference type="Pfam" id="PF05210">
    <property type="entry name" value="Sprouty"/>
    <property type="match status" value="1"/>
</dbReference>
<dbReference type="PROSITE" id="PS51227">
    <property type="entry name" value="SPR"/>
    <property type="match status" value="1"/>
</dbReference>
<accession>Q08E39</accession>
<protein>
    <recommendedName>
        <fullName>Protein sprouty homolog 2</fullName>
        <shortName>Spry-2</shortName>
    </recommendedName>
</protein>
<name>SPY2_BOVIN</name>
<reference key="1">
    <citation type="submission" date="2006-09" db="EMBL/GenBank/DDBJ databases">
        <authorList>
            <consortium name="NIH - Mammalian Gene Collection (MGC) project"/>
        </authorList>
    </citation>
    <scope>NUCLEOTIDE SEQUENCE [LARGE SCALE MRNA]</scope>
    <source>
        <strain>Hereford</strain>
        <tissue>Thalamus</tissue>
    </source>
</reference>
<proteinExistence type="evidence at transcript level"/>
<evidence type="ECO:0000250" key="1"/>
<evidence type="ECO:0000250" key="2">
    <source>
        <dbReference type="UniProtKB" id="O43597"/>
    </source>
</evidence>
<evidence type="ECO:0000250" key="3">
    <source>
        <dbReference type="UniProtKB" id="Q9QXV8"/>
    </source>
</evidence>
<evidence type="ECO:0000255" key="4">
    <source>
        <dbReference type="PROSITE-ProRule" id="PRU00572"/>
    </source>
</evidence>
<evidence type="ECO:0000256" key="5">
    <source>
        <dbReference type="SAM" id="MobiDB-lite"/>
    </source>
</evidence>
<evidence type="ECO:0000305" key="6"/>
<feature type="chain" id="PRO_0000295299" description="Protein sprouty homolog 2">
    <location>
        <begin position="1"/>
        <end position="315"/>
    </location>
</feature>
<feature type="domain" description="SPR" evidence="4">
    <location>
        <begin position="177"/>
        <end position="291"/>
    </location>
</feature>
<feature type="region of interest" description="Disordered" evidence="5">
    <location>
        <begin position="1"/>
        <end position="38"/>
    </location>
</feature>
<feature type="region of interest" description="Disordered" evidence="5">
    <location>
        <begin position="51"/>
        <end position="140"/>
    </location>
</feature>
<feature type="region of interest" description="Required for interaction with CAV1" evidence="3">
    <location>
        <begin position="118"/>
        <end position="315"/>
    </location>
</feature>
<feature type="region of interest" description="Required for interaction with TESK1" evidence="2">
    <location>
        <begin position="178"/>
        <end position="315"/>
    </location>
</feature>
<feature type="compositionally biased region" description="Polar residues" evidence="5">
    <location>
        <begin position="1"/>
        <end position="14"/>
    </location>
</feature>
<feature type="compositionally biased region" description="Basic and acidic residues" evidence="5">
    <location>
        <begin position="20"/>
        <end position="32"/>
    </location>
</feature>
<feature type="compositionally biased region" description="Pro residues" evidence="5">
    <location>
        <begin position="88"/>
        <end position="100"/>
    </location>
</feature>
<feature type="compositionally biased region" description="Low complexity" evidence="5">
    <location>
        <begin position="109"/>
        <end position="140"/>
    </location>
</feature>
<feature type="site" description="Cleavage; by FAP" evidence="2">
    <location>
        <begin position="144"/>
        <end position="145"/>
    </location>
</feature>
<sequence>MEARAQSGSGSQPLLQAPRDSGRQRGEPDPRDALPQQVHVLSLDQIRAIRNTNEYTEGPTVLPRAGLKPAPRPTAQHKHERLHGLPEPRQPSRPQHPPAHPSARASLARSISTVSSGSRSSTRTSTSSSSSEQRLLGSSFSSGPLADRIIRVQPKSELKPGELKPLSKEDVGLHAYKCEDCGKCKCKECTYPRPLPSDWICDKQCLCSAQNVIDYGTCVCCVKGLFYHCSNDDEDNCADNPCSCSQSHCCTRWSAMGVMSLFLPCLWCYLPAKGCLKLCQGCYDRVNRPGCRCKNSNTVCCKVPTVPPRNFEKPT</sequence>
<gene>
    <name type="primary">SPRY2</name>
</gene>
<comment type="function">
    <text evidence="2 3">Antagonist of fibroblast growth factor (FGF) pathways via inhibition of FGF-mediated phosphorylation of ERK1/2 (By similarity). Thereby acts as an antagonist of FGF-induced retinal lens fiber differentiation, may inhibit limb bud outgrowth and may negatively modulate respiratory organogenesis (By similarity). Inhibits TGFB-induced epithelial-to-mesenchymal transition in retinal lens epithelial cells (By similarity). Inhibits CBL/C-CBL-mediated EGFR ubiquitination (By similarity).</text>
</comment>
<comment type="subunit">
    <text evidence="2 3">Forms heterodimers with SPRY1 (By similarity). Forms a tripartite complex containing GAB1, METTL13 and SPRY2 (By similarity). Within the complex interacts with METTL13 (By similarity). Interacts with RAF1 (By similarity). Interacts (via C-terminus) with TESK1 (via C-terminus); the interaction disrupts SPRY2 interaction with GRB2, potentially via disruption of SPRY2 serine dephosphorylation (By similarity). Interacts with PPP2R1A/PP2A-A and PPP2CA/PP2A-C; the interaction with PPP2CA/PP2A-C is inhibited by interaction with TESK1, possibly by vesicular sequestration of SPRY2 (By similarity). Inhibition of the interaction with the serine/threonine-protein phosphatase 2A (PP2A) holoenzyme results in loss of PP2A-mediated dephosphorylation, resulting in the loss of SPRY2 interaction with GRB2 (By similarity). Interacts with GRB2 (By similarity). Interacts with CBL/C-CBL; the interaction inhibits CBL-mediated ubiquitination of EGFR (By similarity). Interacts (via C-terminus) with CAV1 (via C-terminus) (By similarity).</text>
</comment>
<comment type="subcellular location">
    <subcellularLocation>
        <location evidence="2">Cytoplasm</location>
        <location evidence="2">Cytoskeleton</location>
    </subcellularLocation>
    <subcellularLocation>
        <location evidence="2">Cell projection</location>
        <location evidence="2">Ruffle membrane</location>
    </subcellularLocation>
    <text evidence="2">Associated with microtubules in unstimulated cells but is translocated to the membrane ruffles in cells stimulated with EGF (epidermal growth factor).</text>
</comment>
<comment type="domain">
    <text evidence="1">The Cys-rich domain is responsible for the localization of the protein to the membrane ruffles.</text>
</comment>
<comment type="PTM">
    <text evidence="2">Cleaved at Pro-144 by the prolyl endopeptidase FAP (seprase) activity (in vitro).</text>
</comment>
<comment type="similarity">
    <text evidence="6">Belongs to the sprouty family.</text>
</comment>